<protein>
    <recommendedName>
        <fullName evidence="1">Replication initiation control protein YabA</fullName>
    </recommendedName>
</protein>
<accession>Q1JIC7</accession>
<organism>
    <name type="scientific">Streptococcus pyogenes serotype M2 (strain MGAS10270)</name>
    <dbReference type="NCBI Taxonomy" id="370552"/>
    <lineage>
        <taxon>Bacteria</taxon>
        <taxon>Bacillati</taxon>
        <taxon>Bacillota</taxon>
        <taxon>Bacilli</taxon>
        <taxon>Lactobacillales</taxon>
        <taxon>Streptococcaceae</taxon>
        <taxon>Streptococcus</taxon>
    </lineage>
</organism>
<evidence type="ECO:0000255" key="1">
    <source>
        <dbReference type="HAMAP-Rule" id="MF_01159"/>
    </source>
</evidence>
<sequence length="107" mass="12797">MNKKELFDAFDGFSQNLMVTLAEIEAMKKQVQSLVEENTILRLENTKLRERLSHLEHETVAKNPSKQRKDHLEGIYDEGFHICNFFYGQRRENDEECMFCRELLDRK</sequence>
<keyword id="KW-0963">Cytoplasm</keyword>
<keyword id="KW-0235">DNA replication</keyword>
<keyword id="KW-0236">DNA replication inhibitor</keyword>
<keyword id="KW-0479">Metal-binding</keyword>
<keyword id="KW-0862">Zinc</keyword>
<comment type="function">
    <text evidence="1">Involved in control of chromosome replication initiation. Inhibits the cooperative binding of DnaA to the oriC region, thus negatively regulating initiation of chromosome replication. Inhibits the ability of DnaA-ATP to form a helix on DNA; does not disassemble preformed DnaA-DNA helices. Decreases the residence time of DnaA on the chromosome at its binding sites (oriC, replication forks and promoter-binding sites). Tethers DnaA to the replication machinery via the DNA polymerase beta sliding clamp subunit (dnaN). Associates with oriC and other DnaA targets on the chromosome in a DnaA-dependent manner.</text>
</comment>
<comment type="cofactor">
    <cofactor evidence="1">
        <name>Zn(2+)</name>
        <dbReference type="ChEBI" id="CHEBI:29105"/>
    </cofactor>
    <text evidence="1">Binds 1 zinc ion per subunit.</text>
</comment>
<comment type="subunit">
    <text evidence="1">Homotetramer. Interacts with both DnaA and DnaN, acting as a bridge between these two proteins.</text>
</comment>
<comment type="subcellular location">
    <subcellularLocation>
        <location evidence="1">Cytoplasm</location>
        <location evidence="1">Nucleoid</location>
    </subcellularLocation>
    <text evidence="1">Localizes in tight foci, which correspond to the replisome at mid-cell throughout the cell cycle.</text>
</comment>
<comment type="similarity">
    <text evidence="1">Belongs to the YabA family.</text>
</comment>
<gene>
    <name evidence="1" type="primary">yabA</name>
    <name type="ordered locus">MGAS10270_Spy0331</name>
</gene>
<feature type="chain" id="PRO_1000065589" description="Replication initiation control protein YabA">
    <location>
        <begin position="1"/>
        <end position="107"/>
    </location>
</feature>
<feature type="binding site" evidence="1">
    <location>
        <position position="81"/>
    </location>
    <ligand>
        <name>Zn(2+)</name>
        <dbReference type="ChEBI" id="CHEBI:29105"/>
    </ligand>
</feature>
<feature type="binding site" evidence="1">
    <location>
        <position position="83"/>
    </location>
    <ligand>
        <name>Zn(2+)</name>
        <dbReference type="ChEBI" id="CHEBI:29105"/>
    </ligand>
</feature>
<feature type="binding site" evidence="1">
    <location>
        <position position="97"/>
    </location>
    <ligand>
        <name>Zn(2+)</name>
        <dbReference type="ChEBI" id="CHEBI:29105"/>
    </ligand>
</feature>
<feature type="binding site" evidence="1">
    <location>
        <position position="100"/>
    </location>
    <ligand>
        <name>Zn(2+)</name>
        <dbReference type="ChEBI" id="CHEBI:29105"/>
    </ligand>
</feature>
<reference key="1">
    <citation type="journal article" date="2006" name="Proc. Natl. Acad. Sci. U.S.A.">
        <title>Molecular genetic anatomy of inter- and intraserotype variation in the human bacterial pathogen group A Streptococcus.</title>
        <authorList>
            <person name="Beres S.B."/>
            <person name="Richter E.W."/>
            <person name="Nagiec M.J."/>
            <person name="Sumby P."/>
            <person name="Porcella S.F."/>
            <person name="DeLeo F.R."/>
            <person name="Musser J.M."/>
        </authorList>
    </citation>
    <scope>NUCLEOTIDE SEQUENCE [LARGE SCALE GENOMIC DNA]</scope>
    <source>
        <strain>MGAS10270</strain>
    </source>
</reference>
<dbReference type="EMBL" id="CP000260">
    <property type="protein sequence ID" value="ABF33396.1"/>
    <property type="molecule type" value="Genomic_DNA"/>
</dbReference>
<dbReference type="RefSeq" id="WP_002985838.1">
    <property type="nucleotide sequence ID" value="NZ_CVUH01000002.1"/>
</dbReference>
<dbReference type="SMR" id="Q1JIC7"/>
<dbReference type="GeneID" id="69901336"/>
<dbReference type="KEGG" id="sph:MGAS10270_Spy0331"/>
<dbReference type="HOGENOM" id="CLU_157169_0_0_9"/>
<dbReference type="Proteomes" id="UP000002436">
    <property type="component" value="Chromosome"/>
</dbReference>
<dbReference type="GO" id="GO:0009295">
    <property type="term" value="C:nucleoid"/>
    <property type="evidence" value="ECO:0007669"/>
    <property type="project" value="UniProtKB-SubCell"/>
</dbReference>
<dbReference type="GO" id="GO:0006260">
    <property type="term" value="P:DNA replication"/>
    <property type="evidence" value="ECO:0007669"/>
    <property type="project" value="UniProtKB-UniRule"/>
</dbReference>
<dbReference type="HAMAP" id="MF_01159">
    <property type="entry name" value="YabA"/>
    <property type="match status" value="1"/>
</dbReference>
<dbReference type="InterPro" id="IPR010377">
    <property type="entry name" value="YabA"/>
</dbReference>
<dbReference type="NCBIfam" id="NF009640">
    <property type="entry name" value="PRK13169.1-1"/>
    <property type="match status" value="1"/>
</dbReference>
<dbReference type="Pfam" id="PF06156">
    <property type="entry name" value="YabA"/>
    <property type="match status" value="1"/>
</dbReference>
<dbReference type="PIRSF" id="PIRSF021439">
    <property type="entry name" value="DUF972"/>
    <property type="match status" value="1"/>
</dbReference>
<proteinExistence type="inferred from homology"/>
<name>YABA_STRPD</name>